<accession>B2HQK7</accession>
<reference key="1">
    <citation type="journal article" date="2008" name="Genome Res.">
        <title>Insights from the complete genome sequence of Mycobacterium marinum on the evolution of Mycobacterium tuberculosis.</title>
        <authorList>
            <person name="Stinear T.P."/>
            <person name="Seemann T."/>
            <person name="Harrison P.F."/>
            <person name="Jenkin G.A."/>
            <person name="Davies J.K."/>
            <person name="Johnson P.D."/>
            <person name="Abdellah Z."/>
            <person name="Arrowsmith C."/>
            <person name="Chillingworth T."/>
            <person name="Churcher C."/>
            <person name="Clarke K."/>
            <person name="Cronin A."/>
            <person name="Davis P."/>
            <person name="Goodhead I."/>
            <person name="Holroyd N."/>
            <person name="Jagels K."/>
            <person name="Lord A."/>
            <person name="Moule S."/>
            <person name="Mungall K."/>
            <person name="Norbertczak H."/>
            <person name="Quail M.A."/>
            <person name="Rabbinowitsch E."/>
            <person name="Walker D."/>
            <person name="White B."/>
            <person name="Whitehead S."/>
            <person name="Small P.L."/>
            <person name="Brosch R."/>
            <person name="Ramakrishnan L."/>
            <person name="Fischbach M.A."/>
            <person name="Parkhill J."/>
            <person name="Cole S.T."/>
        </authorList>
    </citation>
    <scope>NUCLEOTIDE SEQUENCE [LARGE SCALE GENOMIC DNA]</scope>
    <source>
        <strain>ATCC BAA-535 / M</strain>
    </source>
</reference>
<evidence type="ECO:0000255" key="1">
    <source>
        <dbReference type="HAMAP-Rule" id="MF_01396"/>
    </source>
</evidence>
<protein>
    <recommendedName>
        <fullName evidence="1">ATP synthase subunit c</fullName>
    </recommendedName>
    <alternativeName>
        <fullName evidence="1">ATP synthase F(0) sector subunit c</fullName>
    </alternativeName>
    <alternativeName>
        <fullName evidence="1">F-type ATPase subunit c</fullName>
        <shortName evidence="1">F-ATPase subunit c</shortName>
    </alternativeName>
    <alternativeName>
        <fullName evidence="1">Lipid-binding protein</fullName>
    </alternativeName>
</protein>
<organism>
    <name type="scientific">Mycobacterium marinum (strain ATCC BAA-535 / M)</name>
    <dbReference type="NCBI Taxonomy" id="216594"/>
    <lineage>
        <taxon>Bacteria</taxon>
        <taxon>Bacillati</taxon>
        <taxon>Actinomycetota</taxon>
        <taxon>Actinomycetes</taxon>
        <taxon>Mycobacteriales</taxon>
        <taxon>Mycobacteriaceae</taxon>
        <taxon>Mycobacterium</taxon>
        <taxon>Mycobacterium ulcerans group</taxon>
    </lineage>
</organism>
<keyword id="KW-0066">ATP synthesis</keyword>
<keyword id="KW-1003">Cell membrane</keyword>
<keyword id="KW-0138">CF(0)</keyword>
<keyword id="KW-0375">Hydrogen ion transport</keyword>
<keyword id="KW-0406">Ion transport</keyword>
<keyword id="KW-0446">Lipid-binding</keyword>
<keyword id="KW-0472">Membrane</keyword>
<keyword id="KW-1185">Reference proteome</keyword>
<keyword id="KW-0812">Transmembrane</keyword>
<keyword id="KW-1133">Transmembrane helix</keyword>
<keyword id="KW-0813">Transport</keyword>
<sequence>MDPTIAAGALIGGGLIMAGGAIGAGIGDGIAGNALISGVARQPEAQGRLFTPFFITVGLVEAAYFINLAFMALFVFATPVK</sequence>
<comment type="function">
    <text evidence="1">F(1)F(0) ATP synthase produces ATP from ADP in the presence of a proton or sodium gradient. F-type ATPases consist of two structural domains, F(1) containing the extramembraneous catalytic core and F(0) containing the membrane proton channel, linked together by a central stalk and a peripheral stalk. During catalysis, ATP synthesis in the catalytic domain of F(1) is coupled via a rotary mechanism of the central stalk subunits to proton translocation.</text>
</comment>
<comment type="function">
    <text evidence="1">Key component of the F(0) channel; it plays a direct role in translocation across the membrane. A homomeric c-ring of between 10-14 subunits forms the central stalk rotor element with the F(1) delta and epsilon subunits.</text>
</comment>
<comment type="subunit">
    <text evidence="1">F-type ATPases have 2 components, F(1) - the catalytic core - and F(0) - the membrane proton channel. F(1) has five subunits: alpha(3), beta(3), gamma(1), delta(1), epsilon(1). F(0) has three main subunits: a(1), b(2) and c(10-14). The alpha and beta chains form an alternating ring which encloses part of the gamma chain. F(1) is attached to F(0) by a central stalk formed by the gamma and epsilon chains, while a peripheral stalk is formed by the delta and b chains.</text>
</comment>
<comment type="subcellular location">
    <subcellularLocation>
        <location evidence="1">Cell membrane</location>
        <topology evidence="1">Multi-pass membrane protein</topology>
    </subcellularLocation>
</comment>
<comment type="similarity">
    <text evidence="1">Belongs to the ATPase C chain family.</text>
</comment>
<gene>
    <name evidence="1" type="primary">atpE</name>
    <name type="ordered locus">MMAR_4092</name>
</gene>
<name>ATPL_MYCMM</name>
<proteinExistence type="inferred from homology"/>
<feature type="chain" id="PRO_1000184417" description="ATP synthase subunit c">
    <location>
        <begin position="1"/>
        <end position="81"/>
    </location>
</feature>
<feature type="transmembrane region" description="Helical" evidence="1">
    <location>
        <begin position="5"/>
        <end position="25"/>
    </location>
</feature>
<feature type="transmembrane region" description="Helical" evidence="1">
    <location>
        <begin position="57"/>
        <end position="77"/>
    </location>
</feature>
<feature type="site" description="Reversibly protonated during proton transport" evidence="1">
    <location>
        <position position="61"/>
    </location>
</feature>
<dbReference type="EMBL" id="CP000854">
    <property type="protein sequence ID" value="ACC42499.1"/>
    <property type="molecule type" value="Genomic_DNA"/>
</dbReference>
<dbReference type="RefSeq" id="WP_011741629.1">
    <property type="nucleotide sequence ID" value="NC_010612.1"/>
</dbReference>
<dbReference type="SMR" id="B2HQK7"/>
<dbReference type="STRING" id="216594.MMAR_4092"/>
<dbReference type="GeneID" id="34341440"/>
<dbReference type="KEGG" id="mmi:MMAR_4092"/>
<dbReference type="eggNOG" id="COG0636">
    <property type="taxonomic scope" value="Bacteria"/>
</dbReference>
<dbReference type="HOGENOM" id="CLU_148047_1_2_11"/>
<dbReference type="OrthoDB" id="3578447at2"/>
<dbReference type="Proteomes" id="UP000001190">
    <property type="component" value="Chromosome"/>
</dbReference>
<dbReference type="GO" id="GO:0005886">
    <property type="term" value="C:plasma membrane"/>
    <property type="evidence" value="ECO:0007669"/>
    <property type="project" value="UniProtKB-SubCell"/>
</dbReference>
<dbReference type="GO" id="GO:0045259">
    <property type="term" value="C:proton-transporting ATP synthase complex"/>
    <property type="evidence" value="ECO:0007669"/>
    <property type="project" value="UniProtKB-KW"/>
</dbReference>
<dbReference type="GO" id="GO:0033177">
    <property type="term" value="C:proton-transporting two-sector ATPase complex, proton-transporting domain"/>
    <property type="evidence" value="ECO:0007669"/>
    <property type="project" value="InterPro"/>
</dbReference>
<dbReference type="GO" id="GO:0008289">
    <property type="term" value="F:lipid binding"/>
    <property type="evidence" value="ECO:0007669"/>
    <property type="project" value="UniProtKB-KW"/>
</dbReference>
<dbReference type="GO" id="GO:0046933">
    <property type="term" value="F:proton-transporting ATP synthase activity, rotational mechanism"/>
    <property type="evidence" value="ECO:0007669"/>
    <property type="project" value="UniProtKB-UniRule"/>
</dbReference>
<dbReference type="FunFam" id="1.20.20.10:FF:000010">
    <property type="entry name" value="ATP synthase subunit c"/>
    <property type="match status" value="1"/>
</dbReference>
<dbReference type="Gene3D" id="1.20.20.10">
    <property type="entry name" value="F1F0 ATP synthase subunit C"/>
    <property type="match status" value="1"/>
</dbReference>
<dbReference type="HAMAP" id="MF_01396">
    <property type="entry name" value="ATP_synth_c_bact"/>
    <property type="match status" value="1"/>
</dbReference>
<dbReference type="InterPro" id="IPR005953">
    <property type="entry name" value="ATP_synth_csu_bac/chlpt"/>
</dbReference>
<dbReference type="InterPro" id="IPR000454">
    <property type="entry name" value="ATP_synth_F0_csu"/>
</dbReference>
<dbReference type="InterPro" id="IPR020537">
    <property type="entry name" value="ATP_synth_F0_csu_DDCD_BS"/>
</dbReference>
<dbReference type="InterPro" id="IPR038662">
    <property type="entry name" value="ATP_synth_F0_csu_sf"/>
</dbReference>
<dbReference type="InterPro" id="IPR002379">
    <property type="entry name" value="ATPase_proteolipid_c-like_dom"/>
</dbReference>
<dbReference type="InterPro" id="IPR035921">
    <property type="entry name" value="F/V-ATP_Csub_sf"/>
</dbReference>
<dbReference type="NCBIfam" id="TIGR01260">
    <property type="entry name" value="ATP_synt_c"/>
    <property type="match status" value="1"/>
</dbReference>
<dbReference type="NCBIfam" id="NF004532">
    <property type="entry name" value="PRK05880.1"/>
    <property type="match status" value="1"/>
</dbReference>
<dbReference type="Pfam" id="PF00137">
    <property type="entry name" value="ATP-synt_C"/>
    <property type="match status" value="1"/>
</dbReference>
<dbReference type="PRINTS" id="PR00124">
    <property type="entry name" value="ATPASEC"/>
</dbReference>
<dbReference type="SUPFAM" id="SSF81333">
    <property type="entry name" value="F1F0 ATP synthase subunit C"/>
    <property type="match status" value="1"/>
</dbReference>
<dbReference type="PROSITE" id="PS00605">
    <property type="entry name" value="ATPASE_C"/>
    <property type="match status" value="1"/>
</dbReference>